<accession>A3D6B2</accession>
<sequence length="345" mass="38156">MRVADFSFDLPDELIARYPMAQRNASRLLTLDGNSGALGDKQFTDLLGMINPGDLMVFNNTRVIPARMFGQKASGGKLEILVERMLDDKRILAHVRSSKSPKVDSFILLDGGYQMKMVARHDTLFELELLSELTILEVLEAVGHMPLPPYIDRPDEDADKERYQTVYNQNPGAVAAPTAGLHFDDAMLDALKAKDVNIAFVTLHVGAGTFQPVRVDTILEHKMHSEWANVPQDVVDLIAQTKAAGKRVVAVGTTSVRSLESAARASQGELKAFSGDTDIFIYPGYQFQVVDAMVTNFHLPESTLIMLVSAFAGFDHVMAAYQHAIAQKYRFFSYGDAMFVTKKAH</sequence>
<gene>
    <name evidence="1" type="primary">queA</name>
    <name type="ordered locus">Sbal_2788</name>
</gene>
<comment type="function">
    <text evidence="1">Transfers and isomerizes the ribose moiety from AdoMet to the 7-aminomethyl group of 7-deazaguanine (preQ1-tRNA) to give epoxyqueuosine (oQ-tRNA).</text>
</comment>
<comment type="catalytic activity">
    <reaction evidence="1">
        <text>7-aminomethyl-7-carbaguanosine(34) in tRNA + S-adenosyl-L-methionine = epoxyqueuosine(34) in tRNA + adenine + L-methionine + 2 H(+)</text>
        <dbReference type="Rhea" id="RHEA:32155"/>
        <dbReference type="Rhea" id="RHEA-COMP:10342"/>
        <dbReference type="Rhea" id="RHEA-COMP:18582"/>
        <dbReference type="ChEBI" id="CHEBI:15378"/>
        <dbReference type="ChEBI" id="CHEBI:16708"/>
        <dbReference type="ChEBI" id="CHEBI:57844"/>
        <dbReference type="ChEBI" id="CHEBI:59789"/>
        <dbReference type="ChEBI" id="CHEBI:82833"/>
        <dbReference type="ChEBI" id="CHEBI:194443"/>
        <dbReference type="EC" id="2.4.99.17"/>
    </reaction>
</comment>
<comment type="pathway">
    <text evidence="1">tRNA modification; tRNA-queuosine biosynthesis.</text>
</comment>
<comment type="subunit">
    <text evidence="1">Monomer.</text>
</comment>
<comment type="subcellular location">
    <subcellularLocation>
        <location evidence="1">Cytoplasm</location>
    </subcellularLocation>
</comment>
<comment type="similarity">
    <text evidence="1">Belongs to the QueA family.</text>
</comment>
<keyword id="KW-0963">Cytoplasm</keyword>
<keyword id="KW-0671">Queuosine biosynthesis</keyword>
<keyword id="KW-1185">Reference proteome</keyword>
<keyword id="KW-0949">S-adenosyl-L-methionine</keyword>
<keyword id="KW-0808">Transferase</keyword>
<protein>
    <recommendedName>
        <fullName evidence="1">S-adenosylmethionine:tRNA ribosyltransferase-isomerase</fullName>
        <ecNumber evidence="1">2.4.99.17</ecNumber>
    </recommendedName>
    <alternativeName>
        <fullName evidence="1">Queuosine biosynthesis protein QueA</fullName>
    </alternativeName>
</protein>
<reference key="1">
    <citation type="submission" date="2007-02" db="EMBL/GenBank/DDBJ databases">
        <title>Complete sequence of chromosome of Shewanella baltica OS155.</title>
        <authorList>
            <consortium name="US DOE Joint Genome Institute"/>
            <person name="Copeland A."/>
            <person name="Lucas S."/>
            <person name="Lapidus A."/>
            <person name="Barry K."/>
            <person name="Detter J.C."/>
            <person name="Glavina del Rio T."/>
            <person name="Hammon N."/>
            <person name="Israni S."/>
            <person name="Dalin E."/>
            <person name="Tice H."/>
            <person name="Pitluck S."/>
            <person name="Sims D.R."/>
            <person name="Brettin T."/>
            <person name="Bruce D."/>
            <person name="Han C."/>
            <person name="Tapia R."/>
            <person name="Brainard J."/>
            <person name="Schmutz J."/>
            <person name="Larimer F."/>
            <person name="Land M."/>
            <person name="Hauser L."/>
            <person name="Kyrpides N."/>
            <person name="Mikhailova N."/>
            <person name="Brettar I."/>
            <person name="Klappenbach J."/>
            <person name="Konstantinidis K."/>
            <person name="Rodrigues J."/>
            <person name="Tiedje J."/>
            <person name="Richardson P."/>
        </authorList>
    </citation>
    <scope>NUCLEOTIDE SEQUENCE [LARGE SCALE GENOMIC DNA]</scope>
    <source>
        <strain>OS155 / ATCC BAA-1091</strain>
    </source>
</reference>
<evidence type="ECO:0000255" key="1">
    <source>
        <dbReference type="HAMAP-Rule" id="MF_00113"/>
    </source>
</evidence>
<organism>
    <name type="scientific">Shewanella baltica (strain OS155 / ATCC BAA-1091)</name>
    <dbReference type="NCBI Taxonomy" id="325240"/>
    <lineage>
        <taxon>Bacteria</taxon>
        <taxon>Pseudomonadati</taxon>
        <taxon>Pseudomonadota</taxon>
        <taxon>Gammaproteobacteria</taxon>
        <taxon>Alteromonadales</taxon>
        <taxon>Shewanellaceae</taxon>
        <taxon>Shewanella</taxon>
    </lineage>
</organism>
<proteinExistence type="inferred from homology"/>
<dbReference type="EC" id="2.4.99.17" evidence="1"/>
<dbReference type="EMBL" id="CP000563">
    <property type="protein sequence ID" value="ABN62275.1"/>
    <property type="molecule type" value="Genomic_DNA"/>
</dbReference>
<dbReference type="RefSeq" id="WP_011847206.1">
    <property type="nucleotide sequence ID" value="NC_009052.1"/>
</dbReference>
<dbReference type="SMR" id="A3D6B2"/>
<dbReference type="STRING" id="325240.Sbal_2788"/>
<dbReference type="KEGG" id="sbl:Sbal_2788"/>
<dbReference type="HOGENOM" id="CLU_039110_1_0_6"/>
<dbReference type="OrthoDB" id="9805933at2"/>
<dbReference type="UniPathway" id="UPA00392"/>
<dbReference type="Proteomes" id="UP000001557">
    <property type="component" value="Chromosome"/>
</dbReference>
<dbReference type="GO" id="GO:0005737">
    <property type="term" value="C:cytoplasm"/>
    <property type="evidence" value="ECO:0007669"/>
    <property type="project" value="UniProtKB-SubCell"/>
</dbReference>
<dbReference type="GO" id="GO:0051075">
    <property type="term" value="F:S-adenosylmethionine:tRNA ribosyltransferase-isomerase activity"/>
    <property type="evidence" value="ECO:0007669"/>
    <property type="project" value="UniProtKB-EC"/>
</dbReference>
<dbReference type="GO" id="GO:0008616">
    <property type="term" value="P:queuosine biosynthetic process"/>
    <property type="evidence" value="ECO:0007669"/>
    <property type="project" value="UniProtKB-UniRule"/>
</dbReference>
<dbReference type="GO" id="GO:0002099">
    <property type="term" value="P:tRNA wobble guanine modification"/>
    <property type="evidence" value="ECO:0007669"/>
    <property type="project" value="TreeGrafter"/>
</dbReference>
<dbReference type="FunFam" id="2.40.10.240:FF:000001">
    <property type="entry name" value="S-adenosylmethionine:tRNA ribosyltransferase-isomerase"/>
    <property type="match status" value="1"/>
</dbReference>
<dbReference type="FunFam" id="3.40.1780.10:FF:000001">
    <property type="entry name" value="S-adenosylmethionine:tRNA ribosyltransferase-isomerase"/>
    <property type="match status" value="1"/>
</dbReference>
<dbReference type="Gene3D" id="2.40.10.240">
    <property type="entry name" value="QueA-like"/>
    <property type="match status" value="1"/>
</dbReference>
<dbReference type="Gene3D" id="3.40.1780.10">
    <property type="entry name" value="QueA-like"/>
    <property type="match status" value="1"/>
</dbReference>
<dbReference type="HAMAP" id="MF_00113">
    <property type="entry name" value="QueA"/>
    <property type="match status" value="1"/>
</dbReference>
<dbReference type="InterPro" id="IPR003699">
    <property type="entry name" value="QueA"/>
</dbReference>
<dbReference type="InterPro" id="IPR042118">
    <property type="entry name" value="QueA_dom1"/>
</dbReference>
<dbReference type="InterPro" id="IPR042119">
    <property type="entry name" value="QueA_dom2"/>
</dbReference>
<dbReference type="InterPro" id="IPR036100">
    <property type="entry name" value="QueA_sf"/>
</dbReference>
<dbReference type="NCBIfam" id="NF001140">
    <property type="entry name" value="PRK00147.1"/>
    <property type="match status" value="1"/>
</dbReference>
<dbReference type="NCBIfam" id="TIGR00113">
    <property type="entry name" value="queA"/>
    <property type="match status" value="1"/>
</dbReference>
<dbReference type="PANTHER" id="PTHR30307">
    <property type="entry name" value="S-ADENOSYLMETHIONINE:TRNA RIBOSYLTRANSFERASE-ISOMERASE"/>
    <property type="match status" value="1"/>
</dbReference>
<dbReference type="PANTHER" id="PTHR30307:SF0">
    <property type="entry name" value="S-ADENOSYLMETHIONINE:TRNA RIBOSYLTRANSFERASE-ISOMERASE"/>
    <property type="match status" value="1"/>
</dbReference>
<dbReference type="Pfam" id="PF02547">
    <property type="entry name" value="Queuosine_synth"/>
    <property type="match status" value="1"/>
</dbReference>
<dbReference type="SUPFAM" id="SSF111337">
    <property type="entry name" value="QueA-like"/>
    <property type="match status" value="1"/>
</dbReference>
<feature type="chain" id="PRO_1000015268" description="S-adenosylmethionine:tRNA ribosyltransferase-isomerase">
    <location>
        <begin position="1"/>
        <end position="345"/>
    </location>
</feature>
<name>QUEA_SHEB5</name>